<gene>
    <name type="primary">rad18</name>
    <name type="ORF">AFUA_2G16700</name>
</gene>
<comment type="function">
    <text evidence="1">E3 RING-finger protein, member of the UBC2/RAD6 epistasis group. Associates to the E2 ubiquitin conjugating enzyme UBC2/RAD6 to form the UBC2-RAD18 ubiquitin ligase complex involved in postreplicative repair (PRR) of damaged DNA.</text>
</comment>
<comment type="catalytic activity">
    <reaction>
        <text>S-ubiquitinyl-[E2 ubiquitin-conjugating enzyme]-L-cysteine + [acceptor protein]-L-lysine = [E2 ubiquitin-conjugating enzyme]-L-cysteine + N(6)-ubiquitinyl-[acceptor protein]-L-lysine.</text>
        <dbReference type="EC" id="2.3.2.27"/>
    </reaction>
</comment>
<comment type="pathway">
    <text>Protein modification; protein ubiquitination.</text>
</comment>
<comment type="subunit">
    <text evidence="1">Interacts with E2 UBC2, forming a complex with ubiquitin ligase activity.</text>
</comment>
<comment type="subcellular location">
    <subcellularLocation>
        <location evidence="1">Nucleus</location>
    </subcellularLocation>
</comment>
<comment type="similarity">
    <text evidence="6">Belongs to the RAD18 family.</text>
</comment>
<sequence>MEQTFDLPDSTDWLETPLSLVSPLESSLRCQVCKDFFDNPVITSCSHTFCSLCIRRCLSTEGKCPACRSSDQELKLRRNWAVQELVEAFQNARPSMLELARKAANSRLDGGYVTGQPAAKKRKVDQEDGPDASGSEGIRTRSQSRRGNSQAEPVVVDAIEDDQDKEYIPEDGLVACPICGRRMKNEAVFQHLDICTGDPAPLKQASFGSLQPMSPASRKSKDVTDKPPERLPTINYSLLKDNVLRKKLKDLGIPNWGPRPLLQRRHTEWMNLWNANCDSKAPKSKRELLHELAVWERTQGGHAAPSSESSNTVMRKDFDAAAWSNNHGDEFKRLIANARKRKDAVIRTTIPQAAPARDGTSTASAPEQSTEMSTPPEVAERLQTQTVPEGTSVATIAENETGTIQTPNITQVVSSPPE</sequence>
<proteinExistence type="inferred from homology"/>
<protein>
    <recommendedName>
        <fullName>Postreplication repair E3 ubiquitin-protein ligase rad18</fullName>
        <ecNumber>2.3.2.27</ecNumber>
    </recommendedName>
    <alternativeName>
        <fullName evidence="6">RING-type E3 ubiquitin transferase rad18</fullName>
    </alternativeName>
</protein>
<dbReference type="EC" id="2.3.2.27"/>
<dbReference type="EMBL" id="AAHF01000001">
    <property type="protein sequence ID" value="EAL93969.1"/>
    <property type="molecule type" value="Genomic_DNA"/>
</dbReference>
<dbReference type="RefSeq" id="XP_756007.1">
    <property type="nucleotide sequence ID" value="XM_750914.1"/>
</dbReference>
<dbReference type="SMR" id="Q4WZJ6"/>
<dbReference type="FunCoup" id="Q4WZJ6">
    <property type="interactions" value="304"/>
</dbReference>
<dbReference type="STRING" id="330879.Q4WZJ6"/>
<dbReference type="EnsemblFungi" id="EAL93969">
    <property type="protein sequence ID" value="EAL93969"/>
    <property type="gene ID" value="AFUA_2G16700"/>
</dbReference>
<dbReference type="GeneID" id="3513356"/>
<dbReference type="KEGG" id="afm:AFUA_2G16700"/>
<dbReference type="VEuPathDB" id="FungiDB:Afu2g16700"/>
<dbReference type="eggNOG" id="KOG0287">
    <property type="taxonomic scope" value="Eukaryota"/>
</dbReference>
<dbReference type="HOGENOM" id="CLU_028491_2_0_1"/>
<dbReference type="InParanoid" id="Q4WZJ6"/>
<dbReference type="OMA" id="IPNTGPR"/>
<dbReference type="OrthoDB" id="9049620at2759"/>
<dbReference type="UniPathway" id="UPA00143"/>
<dbReference type="Proteomes" id="UP000002530">
    <property type="component" value="Chromosome 2"/>
</dbReference>
<dbReference type="GO" id="GO:0005634">
    <property type="term" value="C:nucleus"/>
    <property type="evidence" value="ECO:0000318"/>
    <property type="project" value="GO_Central"/>
</dbReference>
<dbReference type="GO" id="GO:0097505">
    <property type="term" value="C:Rad6-Rad18 complex"/>
    <property type="evidence" value="ECO:0000318"/>
    <property type="project" value="GO_Central"/>
</dbReference>
<dbReference type="GO" id="GO:0003697">
    <property type="term" value="F:single-stranded DNA binding"/>
    <property type="evidence" value="ECO:0007669"/>
    <property type="project" value="InterPro"/>
</dbReference>
<dbReference type="GO" id="GO:0061630">
    <property type="term" value="F:ubiquitin protein ligase activity"/>
    <property type="evidence" value="ECO:0007669"/>
    <property type="project" value="InterPro"/>
</dbReference>
<dbReference type="GO" id="GO:0008270">
    <property type="term" value="F:zinc ion binding"/>
    <property type="evidence" value="ECO:0007669"/>
    <property type="project" value="UniProtKB-KW"/>
</dbReference>
<dbReference type="GO" id="GO:0006301">
    <property type="term" value="P:postreplication repair"/>
    <property type="evidence" value="ECO:0000318"/>
    <property type="project" value="GO_Central"/>
</dbReference>
<dbReference type="GO" id="GO:0006513">
    <property type="term" value="P:protein monoubiquitination"/>
    <property type="evidence" value="ECO:0000318"/>
    <property type="project" value="GO_Central"/>
</dbReference>
<dbReference type="FunFam" id="3.30.40.10:FF:000172">
    <property type="entry name" value="E3 ubiquitin-protein ligase RAD18"/>
    <property type="match status" value="1"/>
</dbReference>
<dbReference type="Gene3D" id="3.30.40.10">
    <property type="entry name" value="Zinc/RING finger domain, C3HC4 (zinc finger)"/>
    <property type="match status" value="1"/>
</dbReference>
<dbReference type="InterPro" id="IPR039577">
    <property type="entry name" value="Rad18"/>
</dbReference>
<dbReference type="InterPro" id="IPR004580">
    <property type="entry name" value="Rad18_fungi"/>
</dbReference>
<dbReference type="InterPro" id="IPR006642">
    <property type="entry name" value="Rad18_UBZ4"/>
</dbReference>
<dbReference type="InterPro" id="IPR003034">
    <property type="entry name" value="SAP_dom"/>
</dbReference>
<dbReference type="InterPro" id="IPR001841">
    <property type="entry name" value="Znf_RING"/>
</dbReference>
<dbReference type="InterPro" id="IPR013083">
    <property type="entry name" value="Znf_RING/FYVE/PHD"/>
</dbReference>
<dbReference type="InterPro" id="IPR017907">
    <property type="entry name" value="Znf_RING_CS"/>
</dbReference>
<dbReference type="NCBIfam" id="TIGR00599">
    <property type="entry name" value="rad18"/>
    <property type="match status" value="1"/>
</dbReference>
<dbReference type="PANTHER" id="PTHR14134">
    <property type="entry name" value="E3 UBIQUITIN-PROTEIN LIGASE RAD18"/>
    <property type="match status" value="1"/>
</dbReference>
<dbReference type="PANTHER" id="PTHR14134:SF2">
    <property type="entry name" value="E3 UBIQUITIN-PROTEIN LIGASE RAD18"/>
    <property type="match status" value="1"/>
</dbReference>
<dbReference type="Pfam" id="PF02037">
    <property type="entry name" value="SAP"/>
    <property type="match status" value="1"/>
</dbReference>
<dbReference type="Pfam" id="PF13923">
    <property type="entry name" value="zf-C3HC4_2"/>
    <property type="match status" value="1"/>
</dbReference>
<dbReference type="SMART" id="SM00184">
    <property type="entry name" value="RING"/>
    <property type="match status" value="1"/>
</dbReference>
<dbReference type="SMART" id="SM00513">
    <property type="entry name" value="SAP"/>
    <property type="match status" value="1"/>
</dbReference>
<dbReference type="SMART" id="SM00734">
    <property type="entry name" value="ZnF_Rad18"/>
    <property type="match status" value="1"/>
</dbReference>
<dbReference type="SUPFAM" id="SSF57850">
    <property type="entry name" value="RING/U-box"/>
    <property type="match status" value="1"/>
</dbReference>
<dbReference type="PROSITE" id="PS50800">
    <property type="entry name" value="SAP"/>
    <property type="match status" value="1"/>
</dbReference>
<dbReference type="PROSITE" id="PS00518">
    <property type="entry name" value="ZF_RING_1"/>
    <property type="match status" value="1"/>
</dbReference>
<dbReference type="PROSITE" id="PS50089">
    <property type="entry name" value="ZF_RING_2"/>
    <property type="match status" value="1"/>
</dbReference>
<dbReference type="PROSITE" id="PS51908">
    <property type="entry name" value="ZF_UBZ4"/>
    <property type="match status" value="1"/>
</dbReference>
<organism>
    <name type="scientific">Aspergillus fumigatus (strain ATCC MYA-4609 / CBS 101355 / FGSC A1100 / Af293)</name>
    <name type="common">Neosartorya fumigata</name>
    <dbReference type="NCBI Taxonomy" id="330879"/>
    <lineage>
        <taxon>Eukaryota</taxon>
        <taxon>Fungi</taxon>
        <taxon>Dikarya</taxon>
        <taxon>Ascomycota</taxon>
        <taxon>Pezizomycotina</taxon>
        <taxon>Eurotiomycetes</taxon>
        <taxon>Eurotiomycetidae</taxon>
        <taxon>Eurotiales</taxon>
        <taxon>Aspergillaceae</taxon>
        <taxon>Aspergillus</taxon>
        <taxon>Aspergillus subgen. Fumigati</taxon>
    </lineage>
</organism>
<keyword id="KW-0227">DNA damage</keyword>
<keyword id="KW-0234">DNA repair</keyword>
<keyword id="KW-0238">DNA-binding</keyword>
<keyword id="KW-0479">Metal-binding</keyword>
<keyword id="KW-0539">Nucleus</keyword>
<keyword id="KW-1185">Reference proteome</keyword>
<keyword id="KW-0808">Transferase</keyword>
<keyword id="KW-0833">Ubl conjugation pathway</keyword>
<keyword id="KW-0862">Zinc</keyword>
<keyword id="KW-0863">Zinc-finger</keyword>
<accession>Q4WZJ6</accession>
<reference key="1">
    <citation type="journal article" date="2005" name="Nature">
        <title>Genomic sequence of the pathogenic and allergenic filamentous fungus Aspergillus fumigatus.</title>
        <authorList>
            <person name="Nierman W.C."/>
            <person name="Pain A."/>
            <person name="Anderson M.J."/>
            <person name="Wortman J.R."/>
            <person name="Kim H.S."/>
            <person name="Arroyo J."/>
            <person name="Berriman M."/>
            <person name="Abe K."/>
            <person name="Archer D.B."/>
            <person name="Bermejo C."/>
            <person name="Bennett J.W."/>
            <person name="Bowyer P."/>
            <person name="Chen D."/>
            <person name="Collins M."/>
            <person name="Coulsen R."/>
            <person name="Davies R."/>
            <person name="Dyer P.S."/>
            <person name="Farman M.L."/>
            <person name="Fedorova N."/>
            <person name="Fedorova N.D."/>
            <person name="Feldblyum T.V."/>
            <person name="Fischer R."/>
            <person name="Fosker N."/>
            <person name="Fraser A."/>
            <person name="Garcia J.L."/>
            <person name="Garcia M.J."/>
            <person name="Goble A."/>
            <person name="Goldman G.H."/>
            <person name="Gomi K."/>
            <person name="Griffith-Jones S."/>
            <person name="Gwilliam R."/>
            <person name="Haas B.J."/>
            <person name="Haas H."/>
            <person name="Harris D.E."/>
            <person name="Horiuchi H."/>
            <person name="Huang J."/>
            <person name="Humphray S."/>
            <person name="Jimenez J."/>
            <person name="Keller N."/>
            <person name="Khouri H."/>
            <person name="Kitamoto K."/>
            <person name="Kobayashi T."/>
            <person name="Konzack S."/>
            <person name="Kulkarni R."/>
            <person name="Kumagai T."/>
            <person name="Lafton A."/>
            <person name="Latge J.-P."/>
            <person name="Li W."/>
            <person name="Lord A."/>
            <person name="Lu C."/>
            <person name="Majoros W.H."/>
            <person name="May G.S."/>
            <person name="Miller B.L."/>
            <person name="Mohamoud Y."/>
            <person name="Molina M."/>
            <person name="Monod M."/>
            <person name="Mouyna I."/>
            <person name="Mulligan S."/>
            <person name="Murphy L.D."/>
            <person name="O'Neil S."/>
            <person name="Paulsen I."/>
            <person name="Penalva M.A."/>
            <person name="Pertea M."/>
            <person name="Price C."/>
            <person name="Pritchard B.L."/>
            <person name="Quail M.A."/>
            <person name="Rabbinowitsch E."/>
            <person name="Rawlins N."/>
            <person name="Rajandream M.A."/>
            <person name="Reichard U."/>
            <person name="Renauld H."/>
            <person name="Robson G.D."/>
            <person name="Rodriguez de Cordoba S."/>
            <person name="Rodriguez-Pena J.M."/>
            <person name="Ronning C.M."/>
            <person name="Rutter S."/>
            <person name="Salzberg S.L."/>
            <person name="Sanchez M."/>
            <person name="Sanchez-Ferrero J.C."/>
            <person name="Saunders D."/>
            <person name="Seeger K."/>
            <person name="Squares R."/>
            <person name="Squares S."/>
            <person name="Takeuchi M."/>
            <person name="Tekaia F."/>
            <person name="Turner G."/>
            <person name="Vazquez de Aldana C.R."/>
            <person name="Weidman J."/>
            <person name="White O."/>
            <person name="Woodward J.R."/>
            <person name="Yu J.-H."/>
            <person name="Fraser C.M."/>
            <person name="Galagan J.E."/>
            <person name="Asai K."/>
            <person name="Machida M."/>
            <person name="Hall N."/>
            <person name="Barrell B.G."/>
            <person name="Denning D.W."/>
        </authorList>
    </citation>
    <scope>NUCLEOTIDE SEQUENCE [LARGE SCALE GENOMIC DNA]</scope>
    <source>
        <strain>ATCC MYA-4609 / CBS 101355 / FGSC A1100 / Af293</strain>
    </source>
</reference>
<name>RAD18_ASPFU</name>
<evidence type="ECO:0000250" key="1"/>
<evidence type="ECO:0000255" key="2">
    <source>
        <dbReference type="PROSITE-ProRule" id="PRU00175"/>
    </source>
</evidence>
<evidence type="ECO:0000255" key="3">
    <source>
        <dbReference type="PROSITE-ProRule" id="PRU00186"/>
    </source>
</evidence>
<evidence type="ECO:0000255" key="4">
    <source>
        <dbReference type="PROSITE-ProRule" id="PRU01256"/>
    </source>
</evidence>
<evidence type="ECO:0000256" key="5">
    <source>
        <dbReference type="SAM" id="MobiDB-lite"/>
    </source>
</evidence>
<evidence type="ECO:0000305" key="6"/>
<feature type="chain" id="PRO_0000056152" description="Postreplication repair E3 ubiquitin-protein ligase rad18">
    <location>
        <begin position="1"/>
        <end position="418"/>
    </location>
</feature>
<feature type="domain" description="SAP" evidence="3">
    <location>
        <begin position="236"/>
        <end position="270"/>
    </location>
</feature>
<feature type="zinc finger region" description="RING-type" evidence="2">
    <location>
        <begin position="30"/>
        <end position="68"/>
    </location>
</feature>
<feature type="zinc finger region" description="UBZ4-type" evidence="4">
    <location>
        <begin position="173"/>
        <end position="200"/>
    </location>
</feature>
<feature type="region of interest" description="Disordered" evidence="5">
    <location>
        <begin position="110"/>
        <end position="153"/>
    </location>
</feature>
<feature type="region of interest" description="Disordered" evidence="5">
    <location>
        <begin position="206"/>
        <end position="231"/>
    </location>
</feature>
<feature type="region of interest" description="Disordered" evidence="5">
    <location>
        <begin position="350"/>
        <end position="389"/>
    </location>
</feature>
<feature type="region of interest" description="Disordered" evidence="5">
    <location>
        <begin position="399"/>
        <end position="418"/>
    </location>
</feature>
<feature type="compositionally biased region" description="Basic and acidic residues" evidence="5">
    <location>
        <begin position="219"/>
        <end position="229"/>
    </location>
</feature>
<feature type="compositionally biased region" description="Polar residues" evidence="5">
    <location>
        <begin position="359"/>
        <end position="373"/>
    </location>
</feature>
<feature type="binding site" evidence="4">
    <location>
        <position position="176"/>
    </location>
    <ligand>
        <name>Zn(2+)</name>
        <dbReference type="ChEBI" id="CHEBI:29105"/>
    </ligand>
</feature>
<feature type="binding site" evidence="4">
    <location>
        <position position="179"/>
    </location>
    <ligand>
        <name>Zn(2+)</name>
        <dbReference type="ChEBI" id="CHEBI:29105"/>
    </ligand>
</feature>
<feature type="binding site" evidence="4">
    <location>
        <position position="191"/>
    </location>
    <ligand>
        <name>Zn(2+)</name>
        <dbReference type="ChEBI" id="CHEBI:29105"/>
    </ligand>
</feature>
<feature type="binding site" evidence="4">
    <location>
        <position position="195"/>
    </location>
    <ligand>
        <name>Zn(2+)</name>
        <dbReference type="ChEBI" id="CHEBI:29105"/>
    </ligand>
</feature>